<organism>
    <name type="scientific">Mus musculus</name>
    <name type="common">Mouse</name>
    <dbReference type="NCBI Taxonomy" id="10090"/>
    <lineage>
        <taxon>Eukaryota</taxon>
        <taxon>Metazoa</taxon>
        <taxon>Chordata</taxon>
        <taxon>Craniata</taxon>
        <taxon>Vertebrata</taxon>
        <taxon>Euteleostomi</taxon>
        <taxon>Mammalia</taxon>
        <taxon>Eutheria</taxon>
        <taxon>Euarchontoglires</taxon>
        <taxon>Glires</taxon>
        <taxon>Rodentia</taxon>
        <taxon>Myomorpha</taxon>
        <taxon>Muroidea</taxon>
        <taxon>Muridae</taxon>
        <taxon>Murinae</taxon>
        <taxon>Mus</taxon>
        <taxon>Mus</taxon>
    </lineage>
</organism>
<evidence type="ECO:0000250" key="1"/>
<evidence type="ECO:0000250" key="2">
    <source>
        <dbReference type="UniProtKB" id="O89107"/>
    </source>
</evidence>
<evidence type="ECO:0000250" key="3">
    <source>
        <dbReference type="UniProtKB" id="P00639"/>
    </source>
</evidence>
<evidence type="ECO:0000250" key="4">
    <source>
        <dbReference type="UniProtKB" id="Q13609"/>
    </source>
</evidence>
<evidence type="ECO:0000255" key="5"/>
<evidence type="ECO:0000269" key="6">
    <source>
    </source>
</evidence>
<evidence type="ECO:0000269" key="7">
    <source>
    </source>
</evidence>
<evidence type="ECO:0000269" key="8">
    <source>
    </source>
</evidence>
<evidence type="ECO:0000269" key="9">
    <source>
    </source>
</evidence>
<evidence type="ECO:0000269" key="10">
    <source>
    </source>
</evidence>
<evidence type="ECO:0000269" key="11">
    <source>
    </source>
</evidence>
<evidence type="ECO:0000269" key="12">
    <source>
    </source>
</evidence>
<evidence type="ECO:0000269" key="13">
    <source>
    </source>
</evidence>
<evidence type="ECO:0000269" key="14">
    <source>
    </source>
</evidence>
<evidence type="ECO:0000269" key="15">
    <source>
    </source>
</evidence>
<evidence type="ECO:0000269" key="16">
    <source>
    </source>
</evidence>
<evidence type="ECO:0000305" key="17"/>
<evidence type="ECO:0000305" key="18">
    <source>
    </source>
</evidence>
<evidence type="ECO:0000305" key="19">
    <source>
    </source>
</evidence>
<evidence type="ECO:0000312" key="20">
    <source>
        <dbReference type="MGI" id="MGI:1314633"/>
    </source>
</evidence>
<accession>O55070</accession>
<accession>Q91X38</accession>
<sequence>MSLHPASPRLASLLLFILALHDTLALRLCSFNVRSFGASKKENHEAMDIIVKIIKRCDLILLMEIKDSSNNICPMLMEKLNGNSRRSTTYNYVISSRLGRNTYKEQYAFVYKEKLVSVKTKYHYHDYQDGDTDVFSREPFVVWFHSPFTAVKDFVIVPLHTTPETSVKEIDELVDVYTDVRSQWKTENFIFMGDFNAGCSYVPKKAWQNIRLRTDPKFVWLIGDQEDTTVKKSTSCAYDRIVLCGQEIVNSVVPRSSGVFDFQKAYDLSEEEALDVSDHFPVEFKLQSSRAFTNNRKSVSLKKRKKGNRS</sequence>
<name>DNSL3_MOUSE</name>
<protein>
    <recommendedName>
        <fullName>Deoxyribonuclease gamma</fullName>
        <shortName>DNase gamma</shortName>
        <ecNumber>3.1.21.-</ecNumber>
    </recommendedName>
    <alternativeName>
        <fullName>DNase I homolog protein DHP2</fullName>
    </alternativeName>
    <alternativeName>
        <fullName>Deoxyribonuclease I-like 3</fullName>
        <shortName>DNase I-like 3</shortName>
    </alternativeName>
    <alternativeName>
        <fullName>Liver and spleen DNase</fullName>
        <shortName>LS-DNase</shortName>
        <shortName>LSD</shortName>
    </alternativeName>
</protein>
<feature type="signal peptide" evidence="1">
    <location>
        <begin position="1"/>
        <end position="25"/>
    </location>
</feature>
<feature type="chain" id="PRO_0000007289" description="Deoxyribonuclease gamma">
    <location>
        <begin position="26"/>
        <end position="310"/>
    </location>
</feature>
<feature type="region of interest" description="Not required for free DNA-nuclease activity but required for activity towards liposome-coated DNA" evidence="8">
    <location>
        <begin position="289"/>
        <end position="310"/>
    </location>
</feature>
<feature type="short sequence motif" description="Bipartite nuclear localization signal" evidence="5">
    <location>
        <begin position="40"/>
        <end position="56"/>
    </location>
</feature>
<feature type="short sequence motif" description="Nuclear localization signal" evidence="5">
    <location>
        <begin position="301"/>
        <end position="307"/>
    </location>
</feature>
<feature type="active site" evidence="3">
    <location>
        <position position="105"/>
    </location>
</feature>
<feature type="active site" evidence="3">
    <location>
        <position position="160"/>
    </location>
</feature>
<feature type="disulfide bond" description="Essential for enzymatic activity" evidence="11">
    <location>
        <begin position="199"/>
        <end position="236"/>
    </location>
</feature>
<feature type="sequence variant" description="In strain: DBA/2, NZB and NZW, in vitro decreases nuclease activity against free DNA by approximately twofold and decreases activity to establish a barrier to liposomal gene transfection by eightfold." evidence="9">
    <original>T</original>
    <variation>I</variation>
    <location>
        <position position="89"/>
    </location>
</feature>
<keyword id="KW-0013">ADP-ribosylation</keyword>
<keyword id="KW-0053">Apoptosis</keyword>
<keyword id="KW-0106">Calcium</keyword>
<keyword id="KW-1015">Disulfide bond</keyword>
<keyword id="KW-0255">Endonuclease</keyword>
<keyword id="KW-0256">Endoplasmic reticulum</keyword>
<keyword id="KW-0378">Hydrolase</keyword>
<keyword id="KW-1210">Necrosis</keyword>
<keyword id="KW-0540">Nuclease</keyword>
<keyword id="KW-0539">Nucleus</keyword>
<keyword id="KW-1185">Reference proteome</keyword>
<keyword id="KW-0964">Secreted</keyword>
<keyword id="KW-0732">Signal</keyword>
<gene>
    <name evidence="20" type="primary">Dnase1l3</name>
</gene>
<comment type="function">
    <text evidence="2 7 10 12 14 15 16 18">Has DNA hydrolytic activity. Is capable of both single- and double-stranded DNA cleavage, producing DNA fragments with 3'-OH ends (By similarity). Can cleave chromatin to nucleosomal units and cleaves nucleosomal and liposome-coated DNA (PubMed:12095301, PubMed:15796714, PubMed:19154352). Acts in internucleosomal DNA fragmentation (INDF) during apoptosis and necrosis. The role in apoptosis includes myogenic and neuronal differentiation, and BCR-mediated clonal deletion of self-reactive B cells (PubMed:12050166, PubMed:15167901, PubMed:17218958, PubMed:24312463). Is active on chromatin in apoptotic cell-derived membrane-coated microparticles and thus suppresses anti-DNA autoimmunity (PubMed:15796714, PubMed:27293190). Together with DNASE1, plays a key role in degrading neutrophil extracellular traps (NETs) (PubMed:29191910). NETs are mainly composed of DNA fibers and are released by neutrophils to bind pathogens during inflammation (PubMed:29191910). Degradation of intravascular NETs by DNASE1 and DNASE1L3 is required to prevent formation of clots that obstruct blood vessels and cause organ damage following inflammation (PubMed:29191910).</text>
</comment>
<comment type="cofactor">
    <cofactor evidence="4">
        <name>Ca(2+)</name>
        <dbReference type="ChEBI" id="CHEBI:29108"/>
    </cofactor>
</comment>
<comment type="cofactor">
    <cofactor evidence="4">
        <name>Mg(2+)</name>
        <dbReference type="ChEBI" id="CHEBI:18420"/>
    </cofactor>
</comment>
<comment type="activity regulation">
    <text evidence="2 13">Inhibited by zinc. Inhibited by heparin and proteolysis by plasmin.</text>
</comment>
<comment type="subcellular location">
    <subcellularLocation>
        <location evidence="4 7">Nucleus</location>
    </subcellularLocation>
    <subcellularLocation>
        <location evidence="4">Endoplasmic reticulum</location>
    </subcellularLocation>
    <subcellularLocation>
        <location evidence="8 11 15">Secreted</location>
    </subcellularLocation>
    <text evidence="18 19">Contradictory reports exist about the subcellular localization under normal physiological conditions. Shown to translocate to rough endoplasmic reticulum and to be transported through the entire secretory pathway for secretion. However, under conditions of cell death, may diffuse and/or be actively transported to the nucleus.</text>
</comment>
<comment type="tissue specificity">
    <text evidence="6 7 8 15">Expressed at high levels in liver, spleen and testes. Expressed at lower levels in heart, lungs, skeletal muscle and kidney. Not expressed in brain. Predominantly expressed in macrophages; at protein level. Secreted by mononuclear phagocytes.</text>
</comment>
<comment type="developmental stage">
    <text evidence="6">Expression is first detected at embryonic day 11, and higher amounts were detected at days 15 and 17.</text>
</comment>
<comment type="PTM">
    <text evidence="4">Poly-ADP-ribosylated by PARP1. ADP-ribosylation negatively regulates enzymatic activity during apoptosis.</text>
</comment>
<comment type="disruption phenotype">
    <text evidence="15 16">Mice develop symptoms of the autoimmune disease systemic lupus erythematosus, characterized by high titers of anti-nuclear autoantibodies (ANA) directed against nucleosomes and double-stranded DNA, the deposition of immune complexes in glomeruli and full-blown glomerulonephritis (PubMed:27293190). Mice lacking both Dnase1 and Dnase1l3 show vascular occlusions following bacterial infection: defects are caused by the formation of intravascular neutrophil extracellular traps (NETs) clots that obstruct blood vessels and cause organ damage (PubMed:29191910).</text>
</comment>
<comment type="similarity">
    <text evidence="17">Belongs to the DNase I family.</text>
</comment>
<proteinExistence type="evidence at protein level"/>
<dbReference type="EC" id="3.1.21.-"/>
<dbReference type="EMBL" id="AF047355">
    <property type="protein sequence ID" value="AAC35753.1"/>
    <property type="molecule type" value="mRNA"/>
</dbReference>
<dbReference type="EMBL" id="U76110">
    <property type="protein sequence ID" value="AAD09222.1"/>
    <property type="molecule type" value="mRNA"/>
</dbReference>
<dbReference type="EMBL" id="AY024355">
    <property type="protein sequence ID" value="AAK07733.1"/>
    <property type="molecule type" value="Genomic_DNA"/>
</dbReference>
<dbReference type="EMBL" id="BC012671">
    <property type="protein sequence ID" value="AAH12671.1"/>
    <property type="molecule type" value="mRNA"/>
</dbReference>
<dbReference type="CCDS" id="CCDS26807.1"/>
<dbReference type="RefSeq" id="NP_031896.3">
    <property type="nucleotide sequence ID" value="NM_007870.3"/>
</dbReference>
<dbReference type="RefSeq" id="XP_006517984.1">
    <property type="nucleotide sequence ID" value="XM_006517921.5"/>
</dbReference>
<dbReference type="SMR" id="O55070"/>
<dbReference type="FunCoup" id="O55070">
    <property type="interactions" value="986"/>
</dbReference>
<dbReference type="STRING" id="10090.ENSMUSP00000026315"/>
<dbReference type="iPTMnet" id="O55070"/>
<dbReference type="PhosphoSitePlus" id="O55070"/>
<dbReference type="jPOST" id="O55070"/>
<dbReference type="PaxDb" id="10090-ENSMUSP00000026315"/>
<dbReference type="ProteomicsDB" id="279555"/>
<dbReference type="Antibodypedia" id="15158">
    <property type="antibodies" value="187 antibodies from 24 providers"/>
</dbReference>
<dbReference type="DNASU" id="13421"/>
<dbReference type="Ensembl" id="ENSMUST00000026315.8">
    <property type="protein sequence ID" value="ENSMUSP00000026315.8"/>
    <property type="gene ID" value="ENSMUSG00000025279.8"/>
</dbReference>
<dbReference type="GeneID" id="13421"/>
<dbReference type="KEGG" id="mmu:13421"/>
<dbReference type="UCSC" id="uc007sem.1">
    <property type="organism name" value="mouse"/>
</dbReference>
<dbReference type="AGR" id="MGI:1314633"/>
<dbReference type="CTD" id="1776"/>
<dbReference type="MGI" id="MGI:1314633">
    <property type="gene designation" value="Dnase1l3"/>
</dbReference>
<dbReference type="VEuPathDB" id="HostDB:ENSMUSG00000025279"/>
<dbReference type="eggNOG" id="ENOG502QPNY">
    <property type="taxonomic scope" value="Eukaryota"/>
</dbReference>
<dbReference type="GeneTree" id="ENSGT00950000182846"/>
<dbReference type="HOGENOM" id="CLU_043335_0_1_1"/>
<dbReference type="InParanoid" id="O55070"/>
<dbReference type="OMA" id="NHTDFVW"/>
<dbReference type="OrthoDB" id="10061407at2759"/>
<dbReference type="PhylomeDB" id="O55070"/>
<dbReference type="TreeFam" id="TF329541"/>
<dbReference type="BRENDA" id="3.1.21.1">
    <property type="organism ID" value="3474"/>
</dbReference>
<dbReference type="BioGRID-ORCS" id="13421">
    <property type="hits" value="3 hits in 76 CRISPR screens"/>
</dbReference>
<dbReference type="ChiTaRS" id="Dnase1l3">
    <property type="organism name" value="mouse"/>
</dbReference>
<dbReference type="PRO" id="PR:O55070"/>
<dbReference type="Proteomes" id="UP000000589">
    <property type="component" value="Chromosome 14"/>
</dbReference>
<dbReference type="RNAct" id="O55070">
    <property type="molecule type" value="protein"/>
</dbReference>
<dbReference type="Bgee" id="ENSMUSG00000025279">
    <property type="expression patterns" value="Expressed in lumbar dorsal root ganglion and 39 other cell types or tissues"/>
</dbReference>
<dbReference type="GO" id="GO:0005783">
    <property type="term" value="C:endoplasmic reticulum"/>
    <property type="evidence" value="ECO:0007669"/>
    <property type="project" value="UniProtKB-SubCell"/>
</dbReference>
<dbReference type="GO" id="GO:0005576">
    <property type="term" value="C:extracellular region"/>
    <property type="evidence" value="ECO:0007669"/>
    <property type="project" value="UniProtKB-SubCell"/>
</dbReference>
<dbReference type="GO" id="GO:0005634">
    <property type="term" value="C:nucleus"/>
    <property type="evidence" value="ECO:0000314"/>
    <property type="project" value="MGI"/>
</dbReference>
<dbReference type="GO" id="GO:0003677">
    <property type="term" value="F:DNA binding"/>
    <property type="evidence" value="ECO:0007669"/>
    <property type="project" value="Ensembl"/>
</dbReference>
<dbReference type="GO" id="GO:0004520">
    <property type="term" value="F:DNA endonuclease activity"/>
    <property type="evidence" value="ECO:0007669"/>
    <property type="project" value="Ensembl"/>
</dbReference>
<dbReference type="GO" id="GO:0004519">
    <property type="term" value="F:endonuclease activity"/>
    <property type="evidence" value="ECO:0000314"/>
    <property type="project" value="MGI"/>
</dbReference>
<dbReference type="GO" id="GO:0006309">
    <property type="term" value="P:apoptotic DNA fragmentation"/>
    <property type="evidence" value="ECO:0000314"/>
    <property type="project" value="MGI"/>
</dbReference>
<dbReference type="GO" id="GO:0006308">
    <property type="term" value="P:DNA catabolic process"/>
    <property type="evidence" value="ECO:0000314"/>
    <property type="project" value="UniProtKB"/>
</dbReference>
<dbReference type="GO" id="GO:0002283">
    <property type="term" value="P:neutrophil activation involved in immune response"/>
    <property type="evidence" value="ECO:0000314"/>
    <property type="project" value="UniProtKB"/>
</dbReference>
<dbReference type="GO" id="GO:0010623">
    <property type="term" value="P:programmed cell death involved in cell development"/>
    <property type="evidence" value="ECO:0000314"/>
    <property type="project" value="MGI"/>
</dbReference>
<dbReference type="GO" id="GO:0002673">
    <property type="term" value="P:regulation of acute inflammatory response"/>
    <property type="evidence" value="ECO:0000314"/>
    <property type="project" value="UniProtKB"/>
</dbReference>
<dbReference type="GO" id="GO:0070948">
    <property type="term" value="P:regulation of neutrophil mediated cytotoxicity"/>
    <property type="evidence" value="ECO:0000314"/>
    <property type="project" value="UniProtKB"/>
</dbReference>
<dbReference type="CDD" id="cd10282">
    <property type="entry name" value="DNase1"/>
    <property type="match status" value="1"/>
</dbReference>
<dbReference type="FunFam" id="3.60.10.10:FF:000007">
    <property type="entry name" value="Deoxyribonuclease"/>
    <property type="match status" value="1"/>
</dbReference>
<dbReference type="Gene3D" id="3.60.10.10">
    <property type="entry name" value="Endonuclease/exonuclease/phosphatase"/>
    <property type="match status" value="1"/>
</dbReference>
<dbReference type="InterPro" id="IPR018057">
    <property type="entry name" value="Deoxyribonuclease-1_AS"/>
</dbReference>
<dbReference type="InterPro" id="IPR016202">
    <property type="entry name" value="DNase_I"/>
</dbReference>
<dbReference type="InterPro" id="IPR033125">
    <property type="entry name" value="DNASE_I_2"/>
</dbReference>
<dbReference type="InterPro" id="IPR036691">
    <property type="entry name" value="Endo/exonu/phosph_ase_sf"/>
</dbReference>
<dbReference type="InterPro" id="IPR005135">
    <property type="entry name" value="Endo/exonuclease/phosphatase"/>
</dbReference>
<dbReference type="PANTHER" id="PTHR11371">
    <property type="entry name" value="DEOXYRIBONUCLEASE"/>
    <property type="match status" value="1"/>
</dbReference>
<dbReference type="PANTHER" id="PTHR11371:SF32">
    <property type="entry name" value="DEOXYRIBONUCLEASE GAMMA"/>
    <property type="match status" value="1"/>
</dbReference>
<dbReference type="Pfam" id="PF03372">
    <property type="entry name" value="Exo_endo_phos"/>
    <property type="match status" value="1"/>
</dbReference>
<dbReference type="PIRSF" id="PIRSF000988">
    <property type="entry name" value="DNase_I_euk"/>
    <property type="match status" value="1"/>
</dbReference>
<dbReference type="PRINTS" id="PR00130">
    <property type="entry name" value="DNASEI"/>
</dbReference>
<dbReference type="SMART" id="SM00476">
    <property type="entry name" value="DNaseIc"/>
    <property type="match status" value="1"/>
</dbReference>
<dbReference type="SUPFAM" id="SSF56219">
    <property type="entry name" value="DNase I-like"/>
    <property type="match status" value="1"/>
</dbReference>
<dbReference type="PROSITE" id="PS00919">
    <property type="entry name" value="DNASE_I_1"/>
    <property type="match status" value="1"/>
</dbReference>
<dbReference type="PROSITE" id="PS00918">
    <property type="entry name" value="DNASE_I_2"/>
    <property type="match status" value="1"/>
</dbReference>
<reference key="1">
    <citation type="journal article" date="1998" name="Gene">
        <title>Cloning and characterization of an actin-resistant DNase I-like endonuclease secreted by macrophages.</title>
        <authorList>
            <person name="Baron W.F."/>
            <person name="Pan C.Q."/>
            <person name="Spencer S.A."/>
            <person name="Ryan A.M."/>
            <person name="Lazarus R.A."/>
            <person name="Baker K.P."/>
        </authorList>
    </citation>
    <scope>NUCLEOTIDE SEQUENCE [MRNA]</scope>
</reference>
<reference key="2">
    <citation type="submission" date="2001-01" db="EMBL/GenBank/DDBJ databases">
        <title>Characterization of the murine DNase gamma gene.</title>
        <authorList>
            <person name="Shiokawa D."/>
            <person name="Tanuma S."/>
        </authorList>
    </citation>
    <scope>NUCLEOTIDE SEQUENCE</scope>
    <source>
        <strain>C57BL/6J</strain>
    </source>
</reference>
<reference key="3">
    <citation type="journal article" date="2004" name="Genome Res.">
        <title>The status, quality, and expansion of the NIH full-length cDNA project: the Mammalian Gene Collection (MGC).</title>
        <authorList>
            <consortium name="The MGC Project Team"/>
        </authorList>
    </citation>
    <scope>NUCLEOTIDE SEQUENCE [LARGE SCALE MRNA]</scope>
    <source>
        <tissue>Liver</tissue>
    </source>
</reference>
<reference key="4">
    <citation type="journal article" date="2000" name="J. Biol. Chem.">
        <title>A role of the Ca2+/Mg2+-dependent endonuclease in apoptosis and its inhibition by poly(ADP-ribose) polymerase.</title>
        <authorList>
            <person name="Yakovlev A.G."/>
            <person name="Wang G."/>
            <person name="Stoica B.A."/>
            <person name="Boulares H.A."/>
            <person name="Spoonde A.Y."/>
            <person name="Yoshihara K."/>
            <person name="Smulson M.E."/>
        </authorList>
    </citation>
    <scope>TISSUE SPECIFICITY</scope>
    <scope>DEVELOPMENTAL STAGE</scope>
</reference>
<reference key="5">
    <citation type="journal article" date="2002" name="J. Biol. Chem.">
        <title>Involvement of DNase gamma in apoptosis associated with myogenic differentiation of C2C12 cells.</title>
        <authorList>
            <person name="Shiokawa D."/>
            <person name="Kobayashi T."/>
            <person name="Tanuma S."/>
        </authorList>
    </citation>
    <scope>FUNCTION</scope>
    <scope>SUBCELLULAR LOCATION</scope>
</reference>
<reference key="6">
    <citation type="journal article" date="2002" name="Mol. Ther.">
        <title>Deoxyribonuclease I-like III is an inducible macrophage barrier to liposomal transfection.</title>
        <authorList>
            <person name="Wilber A."/>
            <person name="Lu M."/>
            <person name="Schneider M.C."/>
        </authorList>
    </citation>
    <scope>FUNCTION</scope>
    <scope>SUBCELLULAR LOCATION</scope>
</reference>
<reference key="7">
    <citation type="journal article" date="2004" name="Cell Death Differ.">
        <title>Differential DNases are selectively used in neuronal apoptosis depending on the differentiation state.</title>
        <authorList>
            <person name="Shiokawa D."/>
            <person name="Tanuma S."/>
        </authorList>
    </citation>
    <scope>FUNCTION</scope>
</reference>
<reference key="8">
    <citation type="journal article" date="2005" name="Biochem. J.">
        <title>Comparative characterization of rat deoxyribonuclease 1 (Dnase1) and murine deoxyribonuclease 1-like 3 (Dnase1l3).</title>
        <authorList>
            <person name="Napirei M."/>
            <person name="Wulf S."/>
            <person name="Eulitz D."/>
            <person name="Mannherz H.G."/>
            <person name="Kloeckl T."/>
        </authorList>
    </citation>
    <scope>FUNCTION</scope>
    <scope>SUBCELLULAR LOCATION</scope>
    <scope>COFACTOR</scope>
    <scope>ACTIVITY REGULATION</scope>
</reference>
<reference key="9">
    <citation type="journal article" date="2007" name="Cell Death Differ.">
        <title>Stage-specific expression of DNasegamma during B-cell development and its role in B-cell receptor-mediated apoptosis in WEHI-231 cells.</title>
        <authorList>
            <person name="Shiokawa D."/>
            <person name="Shika Y."/>
            <person name="Araki S."/>
            <person name="Sunaga S."/>
            <person name="Mizuta R."/>
            <person name="Kitamura D."/>
            <person name="Tanuma S."/>
        </authorList>
    </citation>
    <scope>FUNCTION</scope>
</reference>
<reference key="10">
    <citation type="journal article" date="2009" name="FEBS J.">
        <title>Murine serum nucleases--contrasting effects of plasmin and heparin on the activities of DNase1 and DNase1-like 3 (DNase1l3).</title>
        <authorList>
            <person name="Napirei M."/>
            <person name="Ludwig S."/>
            <person name="Mezrhab J."/>
            <person name="Kloeckl T."/>
            <person name="Mannherz H.G."/>
        </authorList>
    </citation>
    <scope>FUNCTION</scope>
    <scope>ACTIVITY REGULATION</scope>
</reference>
<reference key="11">
    <citation type="journal article" date="2013" name="PLoS ONE">
        <title>DNase gamma is the effector endonuclease for internucleosomal DNA fragmentation in necrosis.</title>
        <authorList>
            <person name="Mizuta R."/>
            <person name="Araki S."/>
            <person name="Furukawa M."/>
            <person name="Furukawa Y."/>
            <person name="Ebara S."/>
            <person name="Shiokawa D."/>
            <person name="Hayashi K."/>
            <person name="Tanuma S."/>
            <person name="Kitamura D."/>
        </authorList>
    </citation>
    <scope>FUNCTION</scope>
</reference>
<reference key="12">
    <citation type="journal article" date="2016" name="Cell">
        <title>Digestion of chromatin in apoptotic cell microparticles prevents autoimmunity.</title>
        <authorList>
            <person name="Sisirak V."/>
            <person name="Sally B."/>
            <person name="D'Agati V."/>
            <person name="Martinez-Ortiz W."/>
            <person name="Oezcakar Z.B."/>
            <person name="David J."/>
            <person name="Rashidfarrokhi A."/>
            <person name="Yeste A."/>
            <person name="Panea C."/>
            <person name="Chida A.S."/>
            <person name="Bogunovic M."/>
            <person name="Ivanov I.I."/>
            <person name="Quintana F.J."/>
            <person name="Sanz I."/>
            <person name="Elkon K.B."/>
            <person name="Tekin M."/>
            <person name="Yalcinkaya F."/>
            <person name="Cardozo T.J."/>
            <person name="Clancy R.M."/>
            <person name="Buyon J.P."/>
            <person name="Reizis B."/>
        </authorList>
    </citation>
    <scope>FUNCTION</scope>
    <scope>SUBCELLULAR LOCATION</scope>
    <scope>DISRUPTION PHENOTYPE</scope>
    <scope>TISSUE SPECIFICITY</scope>
</reference>
<reference key="13">
    <citation type="journal article" date="2017" name="Science">
        <title>Host DNases prevent vascular occlusion by neutrophil extracellular traps.</title>
        <authorList>
            <person name="Jimenez-Alcazar M."/>
            <person name="Rangaswamy C."/>
            <person name="Panda R."/>
            <person name="Bitterling J."/>
            <person name="Simsek Y.J."/>
            <person name="Long A.T."/>
            <person name="Bilyy R."/>
            <person name="Krenn V."/>
            <person name="Renne C."/>
            <person name="Renne T."/>
            <person name="Kluge S."/>
            <person name="Panzer U."/>
            <person name="Mizuta R."/>
            <person name="Mannherz H.G."/>
            <person name="Kitamura D."/>
            <person name="Herrmann M."/>
            <person name="Napirei M."/>
            <person name="Fuchs T.A."/>
        </authorList>
    </citation>
    <scope>FUNCTION</scope>
    <scope>DISRUPTION PHENOTYPE</scope>
</reference>
<reference key="14">
    <citation type="journal article" date="2003" name="Clin. Exp. Immunol.">
        <title>Dnase1l3 deficiency in lupus-prone MRL and NZB/W F1 mice.</title>
        <authorList>
            <person name="Wilber A."/>
            <person name="O'Connor T.P."/>
            <person name="Lu M.L."/>
            <person name="Karimi A."/>
            <person name="Schneider M.C."/>
        </authorList>
    </citation>
    <scope>VARIANT ILE-89</scope>
    <scope>CHARACTERIZATION OF ILE-89</scope>
    <scope>POSSIBLE INVOLVEMENT IN SLE</scope>
</reference>